<proteinExistence type="inferred from homology"/>
<sequence length="466" mass="51349">MAHVNHYDVIVIGSGPGGEGAAMGLTKAGLNVAIVEKESSVGGGCTHWGTIPSKALRHAVSRIIEFNSNPLFCRNNTSLHATFSDILGHAKTVIDKQTRLRQGFYDRNDCTLLFGTARFIDTHSIAVMQNDGTEETYSADKFVIATGSRPYRPSDVDFLHERIYDSDSILSLKHDPRHIIIYGAGVIGCEYASIFRGLGVKTDLINTRDRLLEFLDNEVSDALSYHFWNSGVVIRNDETYEKIEGTEDGVIIHLQSGKKMRADCLLYANGRTGNTDKLSLDVVGLESDSRGQLKVNRNYQTAVEHIYAVGDVIGYPSLASAAYDQGRFVAQAITKGQAENYLIEDIPTGIYTIPEISSVGKTEQELTAAKVPYEVGRSSFKHLARAQIAGKDVGSLKILFHRETKEILGIHCFGERAAEIIHIGQAIMEQKGQANTIEYFVNTTFNYPTMAEAYRVAALNGLNRLF</sequence>
<protein>
    <recommendedName>
        <fullName evidence="1">Soluble pyridine nucleotide transhydrogenase</fullName>
        <shortName evidence="1">STH</shortName>
        <ecNumber evidence="1">1.6.1.1</ecNumber>
    </recommendedName>
    <alternativeName>
        <fullName evidence="1">NAD(P)(+) transhydrogenase [B-specific]</fullName>
    </alternativeName>
</protein>
<accession>Q87KN5</accession>
<reference key="1">
    <citation type="journal article" date="2003" name="Lancet">
        <title>Genome sequence of Vibrio parahaemolyticus: a pathogenic mechanism distinct from that of V. cholerae.</title>
        <authorList>
            <person name="Makino K."/>
            <person name="Oshima K."/>
            <person name="Kurokawa K."/>
            <person name="Yokoyama K."/>
            <person name="Uda T."/>
            <person name="Tagomori K."/>
            <person name="Iijima Y."/>
            <person name="Najima M."/>
            <person name="Nakano M."/>
            <person name="Yamashita A."/>
            <person name="Kubota Y."/>
            <person name="Kimura S."/>
            <person name="Yasunaga T."/>
            <person name="Honda T."/>
            <person name="Shinagawa H."/>
            <person name="Hattori M."/>
            <person name="Iida T."/>
        </authorList>
    </citation>
    <scope>NUCLEOTIDE SEQUENCE [LARGE SCALE GENOMIC DNA]</scope>
    <source>
        <strain>RIMD 2210633</strain>
    </source>
</reference>
<dbReference type="EC" id="1.6.1.1" evidence="1"/>
<dbReference type="EMBL" id="BA000031">
    <property type="protein sequence ID" value="BAC61205.1"/>
    <property type="molecule type" value="Genomic_DNA"/>
</dbReference>
<dbReference type="RefSeq" id="NP_799321.1">
    <property type="nucleotide sequence ID" value="NC_004603.1"/>
</dbReference>
<dbReference type="SMR" id="Q87KN5"/>
<dbReference type="KEGG" id="vpa:VP2942"/>
<dbReference type="PATRIC" id="fig|223926.6.peg.2832"/>
<dbReference type="eggNOG" id="COG1249">
    <property type="taxonomic scope" value="Bacteria"/>
</dbReference>
<dbReference type="HOGENOM" id="CLU_016755_0_0_6"/>
<dbReference type="Proteomes" id="UP000002493">
    <property type="component" value="Chromosome 1"/>
</dbReference>
<dbReference type="GO" id="GO:0005829">
    <property type="term" value="C:cytosol"/>
    <property type="evidence" value="ECO:0007669"/>
    <property type="project" value="TreeGrafter"/>
</dbReference>
<dbReference type="GO" id="GO:0004148">
    <property type="term" value="F:dihydrolipoyl dehydrogenase (NADH) activity"/>
    <property type="evidence" value="ECO:0007669"/>
    <property type="project" value="TreeGrafter"/>
</dbReference>
<dbReference type="GO" id="GO:0050660">
    <property type="term" value="F:flavin adenine dinucleotide binding"/>
    <property type="evidence" value="ECO:0007669"/>
    <property type="project" value="TreeGrafter"/>
</dbReference>
<dbReference type="GO" id="GO:0003957">
    <property type="term" value="F:NAD(P)+ transhydrogenase (Si-specific) activity"/>
    <property type="evidence" value="ECO:0007669"/>
    <property type="project" value="UniProtKB-UniRule"/>
</dbReference>
<dbReference type="GO" id="GO:0006103">
    <property type="term" value="P:2-oxoglutarate metabolic process"/>
    <property type="evidence" value="ECO:0007669"/>
    <property type="project" value="TreeGrafter"/>
</dbReference>
<dbReference type="GO" id="GO:0006739">
    <property type="term" value="P:NADP metabolic process"/>
    <property type="evidence" value="ECO:0007669"/>
    <property type="project" value="UniProtKB-UniRule"/>
</dbReference>
<dbReference type="FunFam" id="3.30.390.30:FF:000002">
    <property type="entry name" value="Soluble pyridine nucleotide transhydrogenase"/>
    <property type="match status" value="1"/>
</dbReference>
<dbReference type="FunFam" id="3.50.50.60:FF:000008">
    <property type="entry name" value="Soluble pyridine nucleotide transhydrogenase"/>
    <property type="match status" value="1"/>
</dbReference>
<dbReference type="Gene3D" id="3.30.390.30">
    <property type="match status" value="1"/>
</dbReference>
<dbReference type="Gene3D" id="3.50.50.60">
    <property type="entry name" value="FAD/NAD(P)-binding domain"/>
    <property type="match status" value="2"/>
</dbReference>
<dbReference type="HAMAP" id="MF_00247">
    <property type="entry name" value="SthA"/>
    <property type="match status" value="1"/>
</dbReference>
<dbReference type="InterPro" id="IPR050151">
    <property type="entry name" value="Class-I_Pyr_Nuc-Dis_Oxidored"/>
</dbReference>
<dbReference type="InterPro" id="IPR036188">
    <property type="entry name" value="FAD/NAD-bd_sf"/>
</dbReference>
<dbReference type="InterPro" id="IPR023753">
    <property type="entry name" value="FAD/NAD-binding_dom"/>
</dbReference>
<dbReference type="InterPro" id="IPR016156">
    <property type="entry name" value="FAD/NAD-linked_Rdtase_dimer_sf"/>
</dbReference>
<dbReference type="InterPro" id="IPR001100">
    <property type="entry name" value="Pyr_nuc-diS_OxRdtase"/>
</dbReference>
<dbReference type="InterPro" id="IPR004099">
    <property type="entry name" value="Pyr_nucl-diS_OxRdtase_dimer"/>
</dbReference>
<dbReference type="InterPro" id="IPR022962">
    <property type="entry name" value="STH_gammaproteobact"/>
</dbReference>
<dbReference type="NCBIfam" id="NF003585">
    <property type="entry name" value="PRK05249.1"/>
    <property type="match status" value="1"/>
</dbReference>
<dbReference type="PANTHER" id="PTHR22912">
    <property type="entry name" value="DISULFIDE OXIDOREDUCTASE"/>
    <property type="match status" value="1"/>
</dbReference>
<dbReference type="PANTHER" id="PTHR22912:SF93">
    <property type="entry name" value="SOLUBLE PYRIDINE NUCLEOTIDE TRANSHYDROGENASE"/>
    <property type="match status" value="1"/>
</dbReference>
<dbReference type="Pfam" id="PF07992">
    <property type="entry name" value="Pyr_redox_2"/>
    <property type="match status" value="1"/>
</dbReference>
<dbReference type="Pfam" id="PF02852">
    <property type="entry name" value="Pyr_redox_dim"/>
    <property type="match status" value="1"/>
</dbReference>
<dbReference type="PIRSF" id="PIRSF000350">
    <property type="entry name" value="Mercury_reductase_MerA"/>
    <property type="match status" value="1"/>
</dbReference>
<dbReference type="PRINTS" id="PR00368">
    <property type="entry name" value="FADPNR"/>
</dbReference>
<dbReference type="PRINTS" id="PR00411">
    <property type="entry name" value="PNDRDTASEI"/>
</dbReference>
<dbReference type="SUPFAM" id="SSF51905">
    <property type="entry name" value="FAD/NAD(P)-binding domain"/>
    <property type="match status" value="1"/>
</dbReference>
<dbReference type="SUPFAM" id="SSF55424">
    <property type="entry name" value="FAD/NAD-linked reductases, dimerisation (C-terminal) domain"/>
    <property type="match status" value="1"/>
</dbReference>
<comment type="function">
    <text evidence="1">Conversion of NADPH, generated by peripheral catabolic pathways, to NADH, which can enter the respiratory chain for energy generation.</text>
</comment>
<comment type="catalytic activity">
    <reaction evidence="1">
        <text>NAD(+) + NADPH = NADH + NADP(+)</text>
        <dbReference type="Rhea" id="RHEA:11692"/>
        <dbReference type="ChEBI" id="CHEBI:57540"/>
        <dbReference type="ChEBI" id="CHEBI:57783"/>
        <dbReference type="ChEBI" id="CHEBI:57945"/>
        <dbReference type="ChEBI" id="CHEBI:58349"/>
        <dbReference type="EC" id="1.6.1.1"/>
    </reaction>
</comment>
<comment type="cofactor">
    <cofactor evidence="1">
        <name>FAD</name>
        <dbReference type="ChEBI" id="CHEBI:57692"/>
    </cofactor>
    <text evidence="1">Binds 1 FAD per subunit.</text>
</comment>
<comment type="subcellular location">
    <subcellularLocation>
        <location evidence="1">Cytoplasm</location>
    </subcellularLocation>
</comment>
<comment type="similarity">
    <text evidence="1">Belongs to the class-I pyridine nucleotide-disulfide oxidoreductase family.</text>
</comment>
<gene>
    <name evidence="1" type="primary">sthA</name>
    <name type="ordered locus">VP2942</name>
</gene>
<organism>
    <name type="scientific">Vibrio parahaemolyticus serotype O3:K6 (strain RIMD 2210633)</name>
    <dbReference type="NCBI Taxonomy" id="223926"/>
    <lineage>
        <taxon>Bacteria</taxon>
        <taxon>Pseudomonadati</taxon>
        <taxon>Pseudomonadota</taxon>
        <taxon>Gammaproteobacteria</taxon>
        <taxon>Vibrionales</taxon>
        <taxon>Vibrionaceae</taxon>
        <taxon>Vibrio</taxon>
    </lineage>
</organism>
<keyword id="KW-0963">Cytoplasm</keyword>
<keyword id="KW-0274">FAD</keyword>
<keyword id="KW-0285">Flavoprotein</keyword>
<keyword id="KW-0520">NAD</keyword>
<keyword id="KW-0521">NADP</keyword>
<keyword id="KW-0560">Oxidoreductase</keyword>
<feature type="chain" id="PRO_0000068076" description="Soluble pyridine nucleotide transhydrogenase">
    <location>
        <begin position="1"/>
        <end position="466"/>
    </location>
</feature>
<feature type="binding site" evidence="1">
    <location>
        <begin position="36"/>
        <end position="45"/>
    </location>
    <ligand>
        <name>FAD</name>
        <dbReference type="ChEBI" id="CHEBI:57692"/>
    </ligand>
</feature>
<evidence type="ECO:0000255" key="1">
    <source>
        <dbReference type="HAMAP-Rule" id="MF_00247"/>
    </source>
</evidence>
<name>STHA_VIBPA</name>